<gene>
    <name type="primary">bcsA</name>
    <name type="ordered locus">BSU22050</name>
</gene>
<keyword id="KW-0012">Acyltransferase</keyword>
<keyword id="KW-1185">Reference proteome</keyword>
<keyword id="KW-0808">Transferase</keyword>
<sequence>MAFILSIGTSLPAYNVNQEKAAEFARYMFQHSFKDIDRLLSSFKNGQIHSRQFVKPIEWYKEGHSFEEKNQIYIEETLKHSRAAVRECLSHPEFFQEAIPYEKVEAVFFVSSTGLSTPSIEARLMNELPFSPYTKRIPIWGLGCAGGASGLARAAEYCKAYPEAFVLVISAELCSLTFQPEDKTKSNLIGTSLFGDGIAAALLCGEKADRRVSKLKLAPKIMDAQSVLMKQSEDVMGWDFTDQGFKVIFSRDIPTLVEKWLKTNVQIFLDKHKLSFHDISVFLAHPGGKKVIDAYIKSLGLSSEKLSSAQSILQKHGNMSSATILYVIKDHLQNGHKKEAERGLIGALGPGFSSELLLFSWEKGA</sequence>
<protein>
    <recommendedName>
        <fullName>Putative chalcone synthase</fullName>
        <ecNumber>2.3.1.74</ecNumber>
    </recommendedName>
    <alternativeName>
        <fullName>Naringenin-chalcone synthase</fullName>
    </alternativeName>
</protein>
<accession>P54157</accession>
<reference key="1">
    <citation type="journal article" date="1996" name="Microbiology">
        <title>Organization of the Bacillus subtilis 168 chromosome between kdg and the attachment site of the SP beta prophage: use of long accurate PCR and yeast artificial chromosomes for sequencing.</title>
        <authorList>
            <person name="Capuano V."/>
            <person name="Galleron N."/>
            <person name="Pujic P."/>
            <person name="Sorokin A."/>
            <person name="Ehrlich S.D."/>
        </authorList>
    </citation>
    <scope>NUCLEOTIDE SEQUENCE [GENOMIC DNA]</scope>
    <source>
        <strain>168 / Marburg / ATCC 6051 / DSM 10 / JCM 1465 / NBRC 13719 / NCIMB 3610 / NRRL NRS-744 / VKM B-501</strain>
    </source>
</reference>
<reference key="2">
    <citation type="journal article" date="1997" name="Nature">
        <title>The complete genome sequence of the Gram-positive bacterium Bacillus subtilis.</title>
        <authorList>
            <person name="Kunst F."/>
            <person name="Ogasawara N."/>
            <person name="Moszer I."/>
            <person name="Albertini A.M."/>
            <person name="Alloni G."/>
            <person name="Azevedo V."/>
            <person name="Bertero M.G."/>
            <person name="Bessieres P."/>
            <person name="Bolotin A."/>
            <person name="Borchert S."/>
            <person name="Borriss R."/>
            <person name="Boursier L."/>
            <person name="Brans A."/>
            <person name="Braun M."/>
            <person name="Brignell S.C."/>
            <person name="Bron S."/>
            <person name="Brouillet S."/>
            <person name="Bruschi C.V."/>
            <person name="Caldwell B."/>
            <person name="Capuano V."/>
            <person name="Carter N.M."/>
            <person name="Choi S.-K."/>
            <person name="Codani J.-J."/>
            <person name="Connerton I.F."/>
            <person name="Cummings N.J."/>
            <person name="Daniel R.A."/>
            <person name="Denizot F."/>
            <person name="Devine K.M."/>
            <person name="Duesterhoeft A."/>
            <person name="Ehrlich S.D."/>
            <person name="Emmerson P.T."/>
            <person name="Entian K.-D."/>
            <person name="Errington J."/>
            <person name="Fabret C."/>
            <person name="Ferrari E."/>
            <person name="Foulger D."/>
            <person name="Fritz C."/>
            <person name="Fujita M."/>
            <person name="Fujita Y."/>
            <person name="Fuma S."/>
            <person name="Galizzi A."/>
            <person name="Galleron N."/>
            <person name="Ghim S.-Y."/>
            <person name="Glaser P."/>
            <person name="Goffeau A."/>
            <person name="Golightly E.J."/>
            <person name="Grandi G."/>
            <person name="Guiseppi G."/>
            <person name="Guy B.J."/>
            <person name="Haga K."/>
            <person name="Haiech J."/>
            <person name="Harwood C.R."/>
            <person name="Henaut A."/>
            <person name="Hilbert H."/>
            <person name="Holsappel S."/>
            <person name="Hosono S."/>
            <person name="Hullo M.-F."/>
            <person name="Itaya M."/>
            <person name="Jones L.-M."/>
            <person name="Joris B."/>
            <person name="Karamata D."/>
            <person name="Kasahara Y."/>
            <person name="Klaerr-Blanchard M."/>
            <person name="Klein C."/>
            <person name="Kobayashi Y."/>
            <person name="Koetter P."/>
            <person name="Koningstein G."/>
            <person name="Krogh S."/>
            <person name="Kumano M."/>
            <person name="Kurita K."/>
            <person name="Lapidus A."/>
            <person name="Lardinois S."/>
            <person name="Lauber J."/>
            <person name="Lazarevic V."/>
            <person name="Lee S.-M."/>
            <person name="Levine A."/>
            <person name="Liu H."/>
            <person name="Masuda S."/>
            <person name="Mauel C."/>
            <person name="Medigue C."/>
            <person name="Medina N."/>
            <person name="Mellado R.P."/>
            <person name="Mizuno M."/>
            <person name="Moestl D."/>
            <person name="Nakai S."/>
            <person name="Noback M."/>
            <person name="Noone D."/>
            <person name="O'Reilly M."/>
            <person name="Ogawa K."/>
            <person name="Ogiwara A."/>
            <person name="Oudega B."/>
            <person name="Park S.-H."/>
            <person name="Parro V."/>
            <person name="Pohl T.M."/>
            <person name="Portetelle D."/>
            <person name="Porwollik S."/>
            <person name="Prescott A.M."/>
            <person name="Presecan E."/>
            <person name="Pujic P."/>
            <person name="Purnelle B."/>
            <person name="Rapoport G."/>
            <person name="Rey M."/>
            <person name="Reynolds S."/>
            <person name="Rieger M."/>
            <person name="Rivolta C."/>
            <person name="Rocha E."/>
            <person name="Roche B."/>
            <person name="Rose M."/>
            <person name="Sadaie Y."/>
            <person name="Sato T."/>
            <person name="Scanlan E."/>
            <person name="Schleich S."/>
            <person name="Schroeter R."/>
            <person name="Scoffone F."/>
            <person name="Sekiguchi J."/>
            <person name="Sekowska A."/>
            <person name="Seror S.J."/>
            <person name="Serror P."/>
            <person name="Shin B.-S."/>
            <person name="Soldo B."/>
            <person name="Sorokin A."/>
            <person name="Tacconi E."/>
            <person name="Takagi T."/>
            <person name="Takahashi H."/>
            <person name="Takemaru K."/>
            <person name="Takeuchi M."/>
            <person name="Tamakoshi A."/>
            <person name="Tanaka T."/>
            <person name="Terpstra P."/>
            <person name="Tognoni A."/>
            <person name="Tosato V."/>
            <person name="Uchiyama S."/>
            <person name="Vandenbol M."/>
            <person name="Vannier F."/>
            <person name="Vassarotti A."/>
            <person name="Viari A."/>
            <person name="Wambutt R."/>
            <person name="Wedler E."/>
            <person name="Wedler H."/>
            <person name="Weitzenegger T."/>
            <person name="Winters P."/>
            <person name="Wipat A."/>
            <person name="Yamamoto H."/>
            <person name="Yamane K."/>
            <person name="Yasumoto K."/>
            <person name="Yata K."/>
            <person name="Yoshida K."/>
            <person name="Yoshikawa H.-F."/>
            <person name="Zumstein E."/>
            <person name="Yoshikawa H."/>
            <person name="Danchin A."/>
        </authorList>
    </citation>
    <scope>NUCLEOTIDE SEQUENCE [LARGE SCALE GENOMIC DNA]</scope>
    <source>
        <strain>168</strain>
    </source>
</reference>
<reference key="3">
    <citation type="submission" date="1995-01" db="EMBL/GenBank/DDBJ databases">
        <authorList>
            <person name="Saxild H.H."/>
            <person name="Christensen L."/>
            <person name="Nygaard P."/>
            <person name="Schou S."/>
        </authorList>
    </citation>
    <scope>NUCLEOTIDE SEQUENCE [GENOMIC DNA] OF 1-27</scope>
    <source>
        <strain>168</strain>
    </source>
</reference>
<organism>
    <name type="scientific">Bacillus subtilis (strain 168)</name>
    <dbReference type="NCBI Taxonomy" id="224308"/>
    <lineage>
        <taxon>Bacteria</taxon>
        <taxon>Bacillati</taxon>
        <taxon>Bacillota</taxon>
        <taxon>Bacilli</taxon>
        <taxon>Bacillales</taxon>
        <taxon>Bacillaceae</taxon>
        <taxon>Bacillus</taxon>
    </lineage>
</organism>
<comment type="catalytic activity">
    <reaction evidence="1">
        <text>(E)-4-coumaroyl-CoA + 3 malonyl-CoA + 3 H(+) = 2',4,4',6'-tetrahydroxychalcone + 3 CO2 + 4 CoA</text>
        <dbReference type="Rhea" id="RHEA:11128"/>
        <dbReference type="ChEBI" id="CHEBI:15378"/>
        <dbReference type="ChEBI" id="CHEBI:15413"/>
        <dbReference type="ChEBI" id="CHEBI:16526"/>
        <dbReference type="ChEBI" id="CHEBI:57287"/>
        <dbReference type="ChEBI" id="CHEBI:57384"/>
        <dbReference type="ChEBI" id="CHEBI:85008"/>
        <dbReference type="EC" id="2.3.1.74"/>
    </reaction>
</comment>
<comment type="similarity">
    <text evidence="2">Belongs to the thiolase-like superfamily. Chalcone/stilbene synthases family.</text>
</comment>
<name>BCSA_BACSU</name>
<proteinExistence type="inferred from homology"/>
<evidence type="ECO:0000255" key="1">
    <source>
        <dbReference type="PROSITE-ProRule" id="PRU10023"/>
    </source>
</evidence>
<evidence type="ECO:0000305" key="2"/>
<feature type="chain" id="PRO_0000216091" description="Putative chalcone synthase">
    <location>
        <begin position="1"/>
        <end position="365"/>
    </location>
</feature>
<feature type="active site" evidence="1">
    <location>
        <position position="144"/>
    </location>
</feature>
<dbReference type="EC" id="2.3.1.74"/>
<dbReference type="EMBL" id="L77246">
    <property type="protein sequence ID" value="AAA96613.1"/>
    <property type="molecule type" value="Genomic_DNA"/>
</dbReference>
<dbReference type="EMBL" id="AL009126">
    <property type="protein sequence ID" value="CAB14122.1"/>
    <property type="molecule type" value="Genomic_DNA"/>
</dbReference>
<dbReference type="EMBL" id="X83878">
    <property type="status" value="NOT_ANNOTATED_CDS"/>
    <property type="molecule type" value="Genomic_DNA"/>
</dbReference>
<dbReference type="PIR" id="A69593">
    <property type="entry name" value="A69593"/>
</dbReference>
<dbReference type="SMR" id="P54157"/>
<dbReference type="FunCoup" id="P54157">
    <property type="interactions" value="43"/>
</dbReference>
<dbReference type="STRING" id="224308.BSU22050"/>
<dbReference type="PaxDb" id="224308-BSU22050"/>
<dbReference type="EnsemblBacteria" id="CAB14122">
    <property type="protein sequence ID" value="CAB14122"/>
    <property type="gene ID" value="BSU_22050"/>
</dbReference>
<dbReference type="GeneID" id="939069"/>
<dbReference type="KEGG" id="bsu:BSU22050"/>
<dbReference type="PATRIC" id="fig|224308.179.peg.2409"/>
<dbReference type="eggNOG" id="COG3424">
    <property type="taxonomic scope" value="Bacteria"/>
</dbReference>
<dbReference type="InParanoid" id="P54157"/>
<dbReference type="OrthoDB" id="9786288at2"/>
<dbReference type="PhylomeDB" id="P54157"/>
<dbReference type="BioCyc" id="BSUB:BSU22050-MONOMER"/>
<dbReference type="Proteomes" id="UP000001570">
    <property type="component" value="Chromosome"/>
</dbReference>
<dbReference type="GO" id="GO:0016747">
    <property type="term" value="F:acyltransferase activity, transferring groups other than amino-acyl groups"/>
    <property type="evidence" value="ECO:0000318"/>
    <property type="project" value="GO_Central"/>
</dbReference>
<dbReference type="GO" id="GO:0016210">
    <property type="term" value="F:naringenin-chalcone synthase activity"/>
    <property type="evidence" value="ECO:0007669"/>
    <property type="project" value="UniProtKB-EC"/>
</dbReference>
<dbReference type="GO" id="GO:0030639">
    <property type="term" value="P:polyketide biosynthetic process"/>
    <property type="evidence" value="ECO:0000318"/>
    <property type="project" value="GO_Central"/>
</dbReference>
<dbReference type="CDD" id="cd00831">
    <property type="entry name" value="CHS_like"/>
    <property type="match status" value="1"/>
</dbReference>
<dbReference type="Gene3D" id="3.40.47.10">
    <property type="match status" value="2"/>
</dbReference>
<dbReference type="InterPro" id="IPR012328">
    <property type="entry name" value="Chalcone/stilbene_synt_C"/>
</dbReference>
<dbReference type="InterPro" id="IPR001099">
    <property type="entry name" value="Chalcone/stilbene_synt_N"/>
</dbReference>
<dbReference type="InterPro" id="IPR018088">
    <property type="entry name" value="Chalcone/stilbene_synthase_AS"/>
</dbReference>
<dbReference type="InterPro" id="IPR011141">
    <property type="entry name" value="Polyketide_synthase_type-III"/>
</dbReference>
<dbReference type="InterPro" id="IPR016039">
    <property type="entry name" value="Thiolase-like"/>
</dbReference>
<dbReference type="PANTHER" id="PTHR11877:SF99">
    <property type="entry name" value="1,3,6,8-TETRAHYDROXYNAPHTHALENE SYNTHASE"/>
    <property type="match status" value="1"/>
</dbReference>
<dbReference type="PANTHER" id="PTHR11877">
    <property type="entry name" value="HYDROXYMETHYLGLUTARYL-COA SYNTHASE"/>
    <property type="match status" value="1"/>
</dbReference>
<dbReference type="Pfam" id="PF02797">
    <property type="entry name" value="Chal_sti_synt_C"/>
    <property type="match status" value="1"/>
</dbReference>
<dbReference type="Pfam" id="PF00195">
    <property type="entry name" value="Chal_sti_synt_N"/>
    <property type="match status" value="1"/>
</dbReference>
<dbReference type="PIRSF" id="PIRSF000451">
    <property type="entry name" value="PKS_III"/>
    <property type="match status" value="1"/>
</dbReference>
<dbReference type="SUPFAM" id="SSF53901">
    <property type="entry name" value="Thiolase-like"/>
    <property type="match status" value="2"/>
</dbReference>
<dbReference type="PROSITE" id="PS00441">
    <property type="entry name" value="CHALCONE_SYNTH"/>
    <property type="match status" value="1"/>
</dbReference>